<comment type="function">
    <text evidence="1">Forms part of the ribosomal stalk which helps the ribosome interact with GTP-bound translation factors.</text>
</comment>
<comment type="subunit">
    <text evidence="1">Part of the ribosomal stalk of the 50S ribosomal subunit. Interacts with L10 and the large rRNA to form the base of the stalk. L10 forms an elongated spine to which L12 dimers bind in a sequential fashion forming a multimeric L10(L12)X complex.</text>
</comment>
<comment type="PTM">
    <text evidence="1">One or more lysine residues are methylated.</text>
</comment>
<comment type="similarity">
    <text evidence="1">Belongs to the universal ribosomal protein uL11 family.</text>
</comment>
<organism>
    <name type="scientific">Chloroflexus aurantiacus (strain ATCC 29366 / DSM 635 / J-10-fl)</name>
    <dbReference type="NCBI Taxonomy" id="324602"/>
    <lineage>
        <taxon>Bacteria</taxon>
        <taxon>Bacillati</taxon>
        <taxon>Chloroflexota</taxon>
        <taxon>Chloroflexia</taxon>
        <taxon>Chloroflexales</taxon>
        <taxon>Chloroflexineae</taxon>
        <taxon>Chloroflexaceae</taxon>
        <taxon>Chloroflexus</taxon>
    </lineage>
</organism>
<gene>
    <name evidence="1" type="primary">rplK</name>
    <name type="ordered locus">Caur_2185</name>
</gene>
<proteinExistence type="inferred from homology"/>
<dbReference type="EMBL" id="CP000909">
    <property type="protein sequence ID" value="ABY35396.1"/>
    <property type="molecule type" value="Genomic_DNA"/>
</dbReference>
<dbReference type="RefSeq" id="WP_012258050.1">
    <property type="nucleotide sequence ID" value="NC_010175.1"/>
</dbReference>
<dbReference type="RefSeq" id="YP_001635785.1">
    <property type="nucleotide sequence ID" value="NC_010175.1"/>
</dbReference>
<dbReference type="SMR" id="A9WFP6"/>
<dbReference type="FunCoup" id="A9WFP6">
    <property type="interactions" value="512"/>
</dbReference>
<dbReference type="STRING" id="324602.Caur_2185"/>
<dbReference type="EnsemblBacteria" id="ABY35396">
    <property type="protein sequence ID" value="ABY35396"/>
    <property type="gene ID" value="Caur_2185"/>
</dbReference>
<dbReference type="KEGG" id="cau:Caur_2185"/>
<dbReference type="PATRIC" id="fig|324602.8.peg.2472"/>
<dbReference type="eggNOG" id="COG0080">
    <property type="taxonomic scope" value="Bacteria"/>
</dbReference>
<dbReference type="HOGENOM" id="CLU_074237_2_2_0"/>
<dbReference type="InParanoid" id="A9WFP6"/>
<dbReference type="Proteomes" id="UP000002008">
    <property type="component" value="Chromosome"/>
</dbReference>
<dbReference type="GO" id="GO:0022625">
    <property type="term" value="C:cytosolic large ribosomal subunit"/>
    <property type="evidence" value="ECO:0000318"/>
    <property type="project" value="GO_Central"/>
</dbReference>
<dbReference type="GO" id="GO:0070180">
    <property type="term" value="F:large ribosomal subunit rRNA binding"/>
    <property type="evidence" value="ECO:0000318"/>
    <property type="project" value="GO_Central"/>
</dbReference>
<dbReference type="GO" id="GO:0003735">
    <property type="term" value="F:structural constituent of ribosome"/>
    <property type="evidence" value="ECO:0000318"/>
    <property type="project" value="GO_Central"/>
</dbReference>
<dbReference type="GO" id="GO:0006412">
    <property type="term" value="P:translation"/>
    <property type="evidence" value="ECO:0000318"/>
    <property type="project" value="GO_Central"/>
</dbReference>
<dbReference type="CDD" id="cd00349">
    <property type="entry name" value="Ribosomal_L11"/>
    <property type="match status" value="1"/>
</dbReference>
<dbReference type="FunFam" id="1.10.10.250:FF:000001">
    <property type="entry name" value="50S ribosomal protein L11"/>
    <property type="match status" value="1"/>
</dbReference>
<dbReference type="FunFam" id="3.30.1550.10:FF:000005">
    <property type="entry name" value="50S ribosomal protein L11"/>
    <property type="match status" value="1"/>
</dbReference>
<dbReference type="Gene3D" id="1.10.10.250">
    <property type="entry name" value="Ribosomal protein L11, C-terminal domain"/>
    <property type="match status" value="1"/>
</dbReference>
<dbReference type="Gene3D" id="3.30.1550.10">
    <property type="entry name" value="Ribosomal protein L11/L12, N-terminal domain"/>
    <property type="match status" value="1"/>
</dbReference>
<dbReference type="HAMAP" id="MF_00736">
    <property type="entry name" value="Ribosomal_uL11"/>
    <property type="match status" value="1"/>
</dbReference>
<dbReference type="InterPro" id="IPR000911">
    <property type="entry name" value="Ribosomal_uL11"/>
</dbReference>
<dbReference type="InterPro" id="IPR006519">
    <property type="entry name" value="Ribosomal_uL11_bac-typ"/>
</dbReference>
<dbReference type="InterPro" id="IPR020783">
    <property type="entry name" value="Ribosomal_uL11_C"/>
</dbReference>
<dbReference type="InterPro" id="IPR036769">
    <property type="entry name" value="Ribosomal_uL11_C_sf"/>
</dbReference>
<dbReference type="InterPro" id="IPR020785">
    <property type="entry name" value="Ribosomal_uL11_CS"/>
</dbReference>
<dbReference type="InterPro" id="IPR020784">
    <property type="entry name" value="Ribosomal_uL11_N"/>
</dbReference>
<dbReference type="InterPro" id="IPR036796">
    <property type="entry name" value="Ribosomal_uL11_N_sf"/>
</dbReference>
<dbReference type="NCBIfam" id="TIGR01632">
    <property type="entry name" value="L11_bact"/>
    <property type="match status" value="1"/>
</dbReference>
<dbReference type="PANTHER" id="PTHR11661">
    <property type="entry name" value="60S RIBOSOMAL PROTEIN L12"/>
    <property type="match status" value="1"/>
</dbReference>
<dbReference type="PANTHER" id="PTHR11661:SF1">
    <property type="entry name" value="LARGE RIBOSOMAL SUBUNIT PROTEIN UL11M"/>
    <property type="match status" value="1"/>
</dbReference>
<dbReference type="Pfam" id="PF00298">
    <property type="entry name" value="Ribosomal_L11"/>
    <property type="match status" value="1"/>
</dbReference>
<dbReference type="Pfam" id="PF03946">
    <property type="entry name" value="Ribosomal_L11_N"/>
    <property type="match status" value="1"/>
</dbReference>
<dbReference type="SMART" id="SM00649">
    <property type="entry name" value="RL11"/>
    <property type="match status" value="1"/>
</dbReference>
<dbReference type="SUPFAM" id="SSF54747">
    <property type="entry name" value="Ribosomal L11/L12e N-terminal domain"/>
    <property type="match status" value="1"/>
</dbReference>
<dbReference type="SUPFAM" id="SSF46906">
    <property type="entry name" value="Ribosomal protein L11, C-terminal domain"/>
    <property type="match status" value="1"/>
</dbReference>
<dbReference type="PROSITE" id="PS00359">
    <property type="entry name" value="RIBOSOMAL_L11"/>
    <property type="match status" value="1"/>
</dbReference>
<reference key="1">
    <citation type="journal article" date="2011" name="BMC Genomics">
        <title>Complete genome sequence of the filamentous anoxygenic phototrophic bacterium Chloroflexus aurantiacus.</title>
        <authorList>
            <person name="Tang K.H."/>
            <person name="Barry K."/>
            <person name="Chertkov O."/>
            <person name="Dalin E."/>
            <person name="Han C.S."/>
            <person name="Hauser L.J."/>
            <person name="Honchak B.M."/>
            <person name="Karbach L.E."/>
            <person name="Land M.L."/>
            <person name="Lapidus A."/>
            <person name="Larimer F.W."/>
            <person name="Mikhailova N."/>
            <person name="Pitluck S."/>
            <person name="Pierson B.K."/>
            <person name="Blankenship R.E."/>
        </authorList>
    </citation>
    <scope>NUCLEOTIDE SEQUENCE [LARGE SCALE GENOMIC DNA]</scope>
    <source>
        <strain>ATCC 29366 / DSM 635 / J-10-fl</strain>
    </source>
</reference>
<accession>A9WFP6</accession>
<keyword id="KW-0488">Methylation</keyword>
<keyword id="KW-1185">Reference proteome</keyword>
<keyword id="KW-0687">Ribonucleoprotein</keyword>
<keyword id="KW-0689">Ribosomal protein</keyword>
<keyword id="KW-0694">RNA-binding</keyword>
<keyword id="KW-0699">rRNA-binding</keyword>
<feature type="chain" id="PRO_1000083372" description="Large ribosomal subunit protein uL11">
    <location>
        <begin position="1"/>
        <end position="141"/>
    </location>
</feature>
<evidence type="ECO:0000255" key="1">
    <source>
        <dbReference type="HAMAP-Rule" id="MF_00736"/>
    </source>
</evidence>
<evidence type="ECO:0000305" key="2"/>
<name>RL11_CHLAA</name>
<sequence length="141" mass="14893">MAKKLVAVVKLQLPAGKATPAPPVGPALGQYGINIMAFVKEYNEKSASQAGSIVPVEISVYSDRSFVARLLTPPAADLLRKAAGIQKGASTPKRTTVGTITRAQLRQIAQQKLPDMNANDIEAAERIIAGTARSMGIKIVE</sequence>
<protein>
    <recommendedName>
        <fullName evidence="1">Large ribosomal subunit protein uL11</fullName>
    </recommendedName>
    <alternativeName>
        <fullName evidence="2">50S ribosomal protein L11</fullName>
    </alternativeName>
</protein>